<sequence>MASKEEERTGQRPSISMYDPARDRWEEQPVVPAEPASASASIEATPTQTSEAKPVHDSTVTSTSESLHLPQTTTIEPSQQPEQQQKQPPIPTPPSSQSRRKHKINKMGDYYRSGSADAYAEQSSPAADSHKRKLEDETSEQQPPADQANDRPISKRKRLEERHQKLRKRGQAPPSAYSRRDGDETAARAAPRPRSPSPPLPPRSPSPEVQARQRKRPGGGARRGLVDPQTLRRRQEERERALEEDAMRNSQSRGVTDIVRQHYNAVPQRGREWRKTESKIKGLRSFNNWVKSTLIQKFSPDEEFEKRLLVIDLGCGKGGDLGKWQLAPQPVDLYVGLDPAEVSIIQARERYAGMRSGRGPRGGRRGGPPLFHGEFRSKDCFGEWLGDVDIVQQVGIDPNVGPGGSMMASRWGGGGFDVVTSMFAIHYAFESEEKARQMLRNVAGCLKKGGRFIGVCPNSDIISARVEEEAKAEWGNSIYRVRFPGDTPEDGIFRPPFGWKYSYFMEEAVGEIPEYVVPWEAFRALTEEYNLELQYRKPFMEVWRDEKDDPELGPLSERMGVRDRTTGELTMTPEEQEAVSKYTPLGFTSAEGESANGTGFYHAFCFYKV</sequence>
<keyword id="KW-0489">Methyltransferase</keyword>
<keyword id="KW-0506">mRNA capping</keyword>
<keyword id="KW-0507">mRNA processing</keyword>
<keyword id="KW-0539">Nucleus</keyword>
<keyword id="KW-1185">Reference proteome</keyword>
<keyword id="KW-0694">RNA-binding</keyword>
<keyword id="KW-0949">S-adenosyl-L-methionine</keyword>
<keyword id="KW-0808">Transferase</keyword>
<comment type="function">
    <text evidence="1">Responsible for methylating the 5'-cap structure of mRNAs.</text>
</comment>
<comment type="catalytic activity">
    <reaction evidence="2 3">
        <text>a 5'-end (5'-triphosphoguanosine)-ribonucleoside in mRNA + S-adenosyl-L-methionine = a 5'-end (N(7)-methyl 5'-triphosphoguanosine)-ribonucleoside in mRNA + S-adenosyl-L-homocysteine</text>
        <dbReference type="Rhea" id="RHEA:67008"/>
        <dbReference type="Rhea" id="RHEA-COMP:17166"/>
        <dbReference type="Rhea" id="RHEA-COMP:17167"/>
        <dbReference type="ChEBI" id="CHEBI:57856"/>
        <dbReference type="ChEBI" id="CHEBI:59789"/>
        <dbReference type="ChEBI" id="CHEBI:156461"/>
        <dbReference type="ChEBI" id="CHEBI:167617"/>
        <dbReference type="EC" id="2.1.1.56"/>
    </reaction>
</comment>
<comment type="subcellular location">
    <subcellularLocation>
        <location evidence="1">Nucleus</location>
    </subcellularLocation>
</comment>
<comment type="similarity">
    <text evidence="3">Belongs to the class I-like SAM-binding methyltransferase superfamily. mRNA cap 0 methyltransferase family.</text>
</comment>
<organism>
    <name type="scientific">Aspergillus niger (strain ATCC MYA-4892 / CBS 513.88 / FGSC A1513)</name>
    <dbReference type="NCBI Taxonomy" id="425011"/>
    <lineage>
        <taxon>Eukaryota</taxon>
        <taxon>Fungi</taxon>
        <taxon>Dikarya</taxon>
        <taxon>Ascomycota</taxon>
        <taxon>Pezizomycotina</taxon>
        <taxon>Eurotiomycetes</taxon>
        <taxon>Eurotiomycetidae</taxon>
        <taxon>Eurotiales</taxon>
        <taxon>Aspergillaceae</taxon>
        <taxon>Aspergillus</taxon>
        <taxon>Aspergillus subgen. Circumdati</taxon>
    </lineage>
</organism>
<feature type="chain" id="PRO_0000303903" description="mRNA cap guanine-N(7) methyltransferase">
    <location>
        <begin position="1"/>
        <end position="609"/>
    </location>
</feature>
<feature type="domain" description="mRNA cap 0 methyltransferase" evidence="3">
    <location>
        <begin position="278"/>
        <end position="590"/>
    </location>
</feature>
<feature type="region of interest" description="Disordered" evidence="4">
    <location>
        <begin position="1"/>
        <end position="252"/>
    </location>
</feature>
<feature type="compositionally biased region" description="Basic and acidic residues" evidence="4">
    <location>
        <begin position="1"/>
        <end position="10"/>
    </location>
</feature>
<feature type="compositionally biased region" description="Low complexity" evidence="4">
    <location>
        <begin position="28"/>
        <end position="47"/>
    </location>
</feature>
<feature type="compositionally biased region" description="Low complexity" evidence="4">
    <location>
        <begin position="70"/>
        <end position="87"/>
    </location>
</feature>
<feature type="compositionally biased region" description="Basic and acidic residues" evidence="4">
    <location>
        <begin position="148"/>
        <end position="163"/>
    </location>
</feature>
<feature type="compositionally biased region" description="Pro residues" evidence="4">
    <location>
        <begin position="193"/>
        <end position="205"/>
    </location>
</feature>
<feature type="compositionally biased region" description="Basic and acidic residues" evidence="4">
    <location>
        <begin position="233"/>
        <end position="247"/>
    </location>
</feature>
<feature type="binding site" evidence="3">
    <location>
        <begin position="287"/>
        <end position="288"/>
    </location>
    <ligand>
        <name>mRNA</name>
        <dbReference type="ChEBI" id="CHEBI:33699"/>
    </ligand>
    <ligandPart>
        <name>mRNA cap</name>
    </ligandPart>
</feature>
<feature type="binding site" evidence="3">
    <location>
        <position position="291"/>
    </location>
    <ligand>
        <name>S-adenosyl-L-methionine</name>
        <dbReference type="ChEBI" id="CHEBI:59789"/>
    </ligand>
</feature>
<feature type="binding site" evidence="3">
    <location>
        <position position="314"/>
    </location>
    <ligand>
        <name>S-adenosyl-L-methionine</name>
        <dbReference type="ChEBI" id="CHEBI:59789"/>
    </ligand>
</feature>
<feature type="binding site" evidence="3">
    <location>
        <position position="338"/>
    </location>
    <ligand>
        <name>S-adenosyl-L-methionine</name>
        <dbReference type="ChEBI" id="CHEBI:59789"/>
    </ligand>
</feature>
<feature type="binding site" evidence="2">
    <location>
        <position position="379"/>
    </location>
    <ligand>
        <name>S-adenosyl-L-methionine</name>
        <dbReference type="ChEBI" id="CHEBI:59789"/>
    </ligand>
</feature>
<feature type="binding site" evidence="3">
    <location>
        <begin position="422"/>
        <end position="424"/>
    </location>
    <ligand>
        <name>S-adenosyl-L-methionine</name>
        <dbReference type="ChEBI" id="CHEBI:59789"/>
    </ligand>
</feature>
<feature type="binding site" evidence="2">
    <location>
        <position position="427"/>
    </location>
    <ligand>
        <name>S-adenosyl-L-methionine</name>
        <dbReference type="ChEBI" id="CHEBI:59789"/>
    </ligand>
</feature>
<feature type="site" description="mRNA cap binding" evidence="3">
    <location>
        <position position="317"/>
    </location>
</feature>
<feature type="site" description="mRNA cap binding" evidence="3">
    <location>
        <position position="323"/>
    </location>
</feature>
<feature type="site" description="mRNA cap binding" evidence="3">
    <location>
        <position position="350"/>
    </location>
</feature>
<feature type="site" description="mRNA cap binding" evidence="3">
    <location>
        <position position="426"/>
    </location>
</feature>
<feature type="site" description="mRNA cap binding" evidence="3">
    <location>
        <position position="514"/>
    </location>
</feature>
<feature type="site" description="mRNA cap binding" evidence="3">
    <location>
        <position position="601"/>
    </location>
</feature>
<evidence type="ECO:0000250" key="1"/>
<evidence type="ECO:0000250" key="2">
    <source>
        <dbReference type="UniProtKB" id="O43148"/>
    </source>
</evidence>
<evidence type="ECO:0000255" key="3">
    <source>
        <dbReference type="PROSITE-ProRule" id="PRU00895"/>
    </source>
</evidence>
<evidence type="ECO:0000256" key="4">
    <source>
        <dbReference type="SAM" id="MobiDB-lite"/>
    </source>
</evidence>
<dbReference type="EC" id="2.1.1.56" evidence="2"/>
<dbReference type="EMBL" id="AM270225">
    <property type="protein sequence ID" value="CAK48318.1"/>
    <property type="molecule type" value="Genomic_DNA"/>
</dbReference>
<dbReference type="SMR" id="A2QVS9"/>
<dbReference type="EnsemblFungi" id="CAK48318">
    <property type="protein sequence ID" value="CAK48318"/>
    <property type="gene ID" value="An11g02520"/>
</dbReference>
<dbReference type="VEuPathDB" id="FungiDB:An11g02520"/>
<dbReference type="HOGENOM" id="CLU_020346_3_0_1"/>
<dbReference type="Proteomes" id="UP000006706">
    <property type="component" value="Chromosome 7R"/>
</dbReference>
<dbReference type="GO" id="GO:0005634">
    <property type="term" value="C:nucleus"/>
    <property type="evidence" value="ECO:0007669"/>
    <property type="project" value="UniProtKB-SubCell"/>
</dbReference>
<dbReference type="GO" id="GO:0004482">
    <property type="term" value="F:mRNA 5'-cap (guanine-N7-)-methyltransferase activity"/>
    <property type="evidence" value="ECO:0007669"/>
    <property type="project" value="UniProtKB-EC"/>
</dbReference>
<dbReference type="GO" id="GO:0003723">
    <property type="term" value="F:RNA binding"/>
    <property type="evidence" value="ECO:0007669"/>
    <property type="project" value="UniProtKB-KW"/>
</dbReference>
<dbReference type="FunFam" id="3.40.50.150:FF:000231">
    <property type="entry name" value="mRNA cap guanine-N7 methyltransferase"/>
    <property type="match status" value="1"/>
</dbReference>
<dbReference type="Gene3D" id="3.40.50.150">
    <property type="entry name" value="Vaccinia Virus protein VP39"/>
    <property type="match status" value="1"/>
</dbReference>
<dbReference type="InterPro" id="IPR004971">
    <property type="entry name" value="mRNA_G-N7_MeTrfase_dom"/>
</dbReference>
<dbReference type="InterPro" id="IPR039753">
    <property type="entry name" value="RG7MT1"/>
</dbReference>
<dbReference type="InterPro" id="IPR029063">
    <property type="entry name" value="SAM-dependent_MTases_sf"/>
</dbReference>
<dbReference type="PANTHER" id="PTHR12189:SF2">
    <property type="entry name" value="MRNA CAP GUANINE-N7 METHYLTRANSFERASE"/>
    <property type="match status" value="1"/>
</dbReference>
<dbReference type="PANTHER" id="PTHR12189">
    <property type="entry name" value="MRNA GUANINE-7- METHYLTRANSFERASE"/>
    <property type="match status" value="1"/>
</dbReference>
<dbReference type="Pfam" id="PF03291">
    <property type="entry name" value="mRNA_G-N7_MeTrfase"/>
    <property type="match status" value="1"/>
</dbReference>
<dbReference type="SUPFAM" id="SSF53335">
    <property type="entry name" value="S-adenosyl-L-methionine-dependent methyltransferases"/>
    <property type="match status" value="1"/>
</dbReference>
<dbReference type="PROSITE" id="PS51562">
    <property type="entry name" value="RNA_CAP0_MT"/>
    <property type="match status" value="1"/>
</dbReference>
<reference key="1">
    <citation type="journal article" date="2007" name="Nat. Biotechnol.">
        <title>Genome sequencing and analysis of the versatile cell factory Aspergillus niger CBS 513.88.</title>
        <authorList>
            <person name="Pel H.J."/>
            <person name="de Winde J.H."/>
            <person name="Archer D.B."/>
            <person name="Dyer P.S."/>
            <person name="Hofmann G."/>
            <person name="Schaap P.J."/>
            <person name="Turner G."/>
            <person name="de Vries R.P."/>
            <person name="Albang R."/>
            <person name="Albermann K."/>
            <person name="Andersen M.R."/>
            <person name="Bendtsen J.D."/>
            <person name="Benen J.A.E."/>
            <person name="van den Berg M."/>
            <person name="Breestraat S."/>
            <person name="Caddick M.X."/>
            <person name="Contreras R."/>
            <person name="Cornell M."/>
            <person name="Coutinho P.M."/>
            <person name="Danchin E.G.J."/>
            <person name="Debets A.J.M."/>
            <person name="Dekker P."/>
            <person name="van Dijck P.W.M."/>
            <person name="van Dijk A."/>
            <person name="Dijkhuizen L."/>
            <person name="Driessen A.J.M."/>
            <person name="d'Enfert C."/>
            <person name="Geysens S."/>
            <person name="Goosen C."/>
            <person name="Groot G.S.P."/>
            <person name="de Groot P.W.J."/>
            <person name="Guillemette T."/>
            <person name="Henrissat B."/>
            <person name="Herweijer M."/>
            <person name="van den Hombergh J.P.T.W."/>
            <person name="van den Hondel C.A.M.J.J."/>
            <person name="van der Heijden R.T.J.M."/>
            <person name="van der Kaaij R.M."/>
            <person name="Klis F.M."/>
            <person name="Kools H.J."/>
            <person name="Kubicek C.P."/>
            <person name="van Kuyk P.A."/>
            <person name="Lauber J."/>
            <person name="Lu X."/>
            <person name="van der Maarel M.J.E.C."/>
            <person name="Meulenberg R."/>
            <person name="Menke H."/>
            <person name="Mortimer M.A."/>
            <person name="Nielsen J."/>
            <person name="Oliver S.G."/>
            <person name="Olsthoorn M."/>
            <person name="Pal K."/>
            <person name="van Peij N.N.M.E."/>
            <person name="Ram A.F.J."/>
            <person name="Rinas U."/>
            <person name="Roubos J.A."/>
            <person name="Sagt C.M.J."/>
            <person name="Schmoll M."/>
            <person name="Sun J."/>
            <person name="Ussery D."/>
            <person name="Varga J."/>
            <person name="Vervecken W."/>
            <person name="van de Vondervoort P.J.J."/>
            <person name="Wedler H."/>
            <person name="Woesten H.A.B."/>
            <person name="Zeng A.-P."/>
            <person name="van Ooyen A.J.J."/>
            <person name="Visser J."/>
            <person name="Stam H."/>
        </authorList>
    </citation>
    <scope>NUCLEOTIDE SEQUENCE [LARGE SCALE GENOMIC DNA]</scope>
    <source>
        <strain>ATCC MYA-4892 / CBS 513.88 / FGSC A1513</strain>
    </source>
</reference>
<accession>A2QVS9</accession>
<gene>
    <name type="primary">abd1</name>
    <name type="ORF">An11g02520</name>
</gene>
<name>MCES_ASPNC</name>
<protein>
    <recommendedName>
        <fullName>mRNA cap guanine-N(7) methyltransferase</fullName>
        <ecNumber evidence="2">2.1.1.56</ecNumber>
    </recommendedName>
    <alternativeName>
        <fullName>mRNA (guanine-N(7))-methyltransferase</fullName>
    </alternativeName>
    <alternativeName>
        <fullName>mRNA cap methyltransferase</fullName>
    </alternativeName>
</protein>
<proteinExistence type="inferred from homology"/>